<feature type="chain" id="PRO_1000014863" description="Large ribosomal subunit protein bL9">
    <location>
        <begin position="1"/>
        <end position="150"/>
    </location>
</feature>
<protein>
    <recommendedName>
        <fullName evidence="1">Large ribosomal subunit protein bL9</fullName>
    </recommendedName>
    <alternativeName>
        <fullName evidence="2">50S ribosomal protein L9</fullName>
    </alternativeName>
</protein>
<comment type="function">
    <text evidence="1">Binds to the 23S rRNA.</text>
</comment>
<comment type="similarity">
    <text evidence="1">Belongs to the bacterial ribosomal protein bL9 family.</text>
</comment>
<keyword id="KW-0687">Ribonucleoprotein</keyword>
<keyword id="KW-0689">Ribosomal protein</keyword>
<keyword id="KW-0694">RNA-binding</keyword>
<keyword id="KW-0699">rRNA-binding</keyword>
<organism>
    <name type="scientific">Shewanella sp. (strain MR-7)</name>
    <dbReference type="NCBI Taxonomy" id="60481"/>
    <lineage>
        <taxon>Bacteria</taxon>
        <taxon>Pseudomonadati</taxon>
        <taxon>Pseudomonadota</taxon>
        <taxon>Gammaproteobacteria</taxon>
        <taxon>Alteromonadales</taxon>
        <taxon>Shewanellaceae</taxon>
        <taxon>Shewanella</taxon>
    </lineage>
</organism>
<reference key="1">
    <citation type="submission" date="2006-08" db="EMBL/GenBank/DDBJ databases">
        <title>Complete sequence of chromosome 1 of Shewanella sp. MR-7.</title>
        <authorList>
            <person name="Copeland A."/>
            <person name="Lucas S."/>
            <person name="Lapidus A."/>
            <person name="Barry K."/>
            <person name="Detter J.C."/>
            <person name="Glavina del Rio T."/>
            <person name="Hammon N."/>
            <person name="Israni S."/>
            <person name="Dalin E."/>
            <person name="Tice H."/>
            <person name="Pitluck S."/>
            <person name="Kiss H."/>
            <person name="Brettin T."/>
            <person name="Bruce D."/>
            <person name="Han C."/>
            <person name="Tapia R."/>
            <person name="Gilna P."/>
            <person name="Schmutz J."/>
            <person name="Larimer F."/>
            <person name="Land M."/>
            <person name="Hauser L."/>
            <person name="Kyrpides N."/>
            <person name="Mikhailova N."/>
            <person name="Nealson K."/>
            <person name="Konstantinidis K."/>
            <person name="Klappenbach J."/>
            <person name="Tiedje J."/>
            <person name="Richardson P."/>
        </authorList>
    </citation>
    <scope>NUCLEOTIDE SEQUENCE [LARGE SCALE GENOMIC DNA]</scope>
    <source>
        <strain>MR-7</strain>
    </source>
</reference>
<evidence type="ECO:0000255" key="1">
    <source>
        <dbReference type="HAMAP-Rule" id="MF_00503"/>
    </source>
</evidence>
<evidence type="ECO:0000305" key="2"/>
<sequence>MNVILLDKIANLGNLGDQVAVKAGYARNYLLPQGKAVVANESNVKVFEARRAELEAKLAADLAAANQRAEKIAALEAVVIASKAGDEGKLFGSVGTRDIADAVTAAGVELAKAEVRLPLGALRTTGDFEVEVQLHTEVKAVVKVSVVAEA</sequence>
<name>RL9_SHESR</name>
<proteinExistence type="inferred from homology"/>
<accession>Q0HYW3</accession>
<gene>
    <name evidence="1" type="primary">rplI</name>
    <name type="ordered locus">Shewmr7_0690</name>
</gene>
<dbReference type="EMBL" id="CP000444">
    <property type="protein sequence ID" value="ABI41692.1"/>
    <property type="molecule type" value="Genomic_DNA"/>
</dbReference>
<dbReference type="SMR" id="Q0HYW3"/>
<dbReference type="KEGG" id="shm:Shewmr7_0690"/>
<dbReference type="HOGENOM" id="CLU_078938_4_1_6"/>
<dbReference type="GO" id="GO:1990904">
    <property type="term" value="C:ribonucleoprotein complex"/>
    <property type="evidence" value="ECO:0007669"/>
    <property type="project" value="UniProtKB-KW"/>
</dbReference>
<dbReference type="GO" id="GO:0005840">
    <property type="term" value="C:ribosome"/>
    <property type="evidence" value="ECO:0007669"/>
    <property type="project" value="UniProtKB-KW"/>
</dbReference>
<dbReference type="GO" id="GO:0019843">
    <property type="term" value="F:rRNA binding"/>
    <property type="evidence" value="ECO:0007669"/>
    <property type="project" value="UniProtKB-UniRule"/>
</dbReference>
<dbReference type="GO" id="GO:0003735">
    <property type="term" value="F:structural constituent of ribosome"/>
    <property type="evidence" value="ECO:0007669"/>
    <property type="project" value="InterPro"/>
</dbReference>
<dbReference type="GO" id="GO:0006412">
    <property type="term" value="P:translation"/>
    <property type="evidence" value="ECO:0007669"/>
    <property type="project" value="UniProtKB-UniRule"/>
</dbReference>
<dbReference type="FunFam" id="3.10.430.100:FF:000001">
    <property type="entry name" value="50S ribosomal protein L9"/>
    <property type="match status" value="1"/>
</dbReference>
<dbReference type="FunFam" id="3.40.5.10:FF:000001">
    <property type="entry name" value="50S ribosomal protein L9"/>
    <property type="match status" value="1"/>
</dbReference>
<dbReference type="Gene3D" id="3.10.430.100">
    <property type="entry name" value="Ribosomal protein L9, C-terminal domain"/>
    <property type="match status" value="1"/>
</dbReference>
<dbReference type="Gene3D" id="3.40.5.10">
    <property type="entry name" value="Ribosomal protein L9, N-terminal domain"/>
    <property type="match status" value="1"/>
</dbReference>
<dbReference type="HAMAP" id="MF_00503">
    <property type="entry name" value="Ribosomal_bL9"/>
    <property type="match status" value="1"/>
</dbReference>
<dbReference type="InterPro" id="IPR000244">
    <property type="entry name" value="Ribosomal_bL9"/>
</dbReference>
<dbReference type="InterPro" id="IPR009027">
    <property type="entry name" value="Ribosomal_bL9/RNase_H1_N"/>
</dbReference>
<dbReference type="InterPro" id="IPR020594">
    <property type="entry name" value="Ribosomal_bL9_bac/chp"/>
</dbReference>
<dbReference type="InterPro" id="IPR020069">
    <property type="entry name" value="Ribosomal_bL9_C"/>
</dbReference>
<dbReference type="InterPro" id="IPR036791">
    <property type="entry name" value="Ribosomal_bL9_C_sf"/>
</dbReference>
<dbReference type="InterPro" id="IPR020070">
    <property type="entry name" value="Ribosomal_bL9_N"/>
</dbReference>
<dbReference type="InterPro" id="IPR036935">
    <property type="entry name" value="Ribosomal_bL9_N_sf"/>
</dbReference>
<dbReference type="NCBIfam" id="TIGR00158">
    <property type="entry name" value="L9"/>
    <property type="match status" value="1"/>
</dbReference>
<dbReference type="PANTHER" id="PTHR21368">
    <property type="entry name" value="50S RIBOSOMAL PROTEIN L9"/>
    <property type="match status" value="1"/>
</dbReference>
<dbReference type="Pfam" id="PF03948">
    <property type="entry name" value="Ribosomal_L9_C"/>
    <property type="match status" value="1"/>
</dbReference>
<dbReference type="Pfam" id="PF01281">
    <property type="entry name" value="Ribosomal_L9_N"/>
    <property type="match status" value="1"/>
</dbReference>
<dbReference type="SUPFAM" id="SSF55658">
    <property type="entry name" value="L9 N-domain-like"/>
    <property type="match status" value="1"/>
</dbReference>
<dbReference type="SUPFAM" id="SSF55653">
    <property type="entry name" value="Ribosomal protein L9 C-domain"/>
    <property type="match status" value="1"/>
</dbReference>
<dbReference type="PROSITE" id="PS00651">
    <property type="entry name" value="RIBOSOMAL_L9"/>
    <property type="match status" value="1"/>
</dbReference>